<comment type="function">
    <text evidence="1">Catalyzes the reversible cyclization of carbamoyl aspartate to dihydroorotate.</text>
</comment>
<comment type="catalytic activity">
    <reaction evidence="1">
        <text>(S)-dihydroorotate + H2O = N-carbamoyl-L-aspartate + H(+)</text>
        <dbReference type="Rhea" id="RHEA:24296"/>
        <dbReference type="ChEBI" id="CHEBI:15377"/>
        <dbReference type="ChEBI" id="CHEBI:15378"/>
        <dbReference type="ChEBI" id="CHEBI:30864"/>
        <dbReference type="ChEBI" id="CHEBI:32814"/>
        <dbReference type="EC" id="3.5.2.3"/>
    </reaction>
</comment>
<comment type="cofactor">
    <cofactor evidence="1">
        <name>Zn(2+)</name>
        <dbReference type="ChEBI" id="CHEBI:29105"/>
    </cofactor>
    <text evidence="1">Binds 2 Zn(2+) ions per subunit.</text>
</comment>
<comment type="pathway">
    <text evidence="1">Pyrimidine metabolism; UMP biosynthesis via de novo pathway; (S)-dihydroorotate from bicarbonate: step 3/3.</text>
</comment>
<comment type="similarity">
    <text evidence="1">Belongs to the metallo-dependent hydrolases superfamily. DHOase family. Class I DHOase subfamily.</text>
</comment>
<gene>
    <name evidence="1" type="primary">pyrC</name>
    <name type="ordered locus">A2cp1_2329</name>
</gene>
<name>PYRC_ANAD2</name>
<reference key="1">
    <citation type="submission" date="2009-01" db="EMBL/GenBank/DDBJ databases">
        <title>Complete sequence of Anaeromyxobacter dehalogenans 2CP-1.</title>
        <authorList>
            <person name="Lucas S."/>
            <person name="Copeland A."/>
            <person name="Lapidus A."/>
            <person name="Glavina del Rio T."/>
            <person name="Dalin E."/>
            <person name="Tice H."/>
            <person name="Bruce D."/>
            <person name="Goodwin L."/>
            <person name="Pitluck S."/>
            <person name="Saunders E."/>
            <person name="Brettin T."/>
            <person name="Detter J.C."/>
            <person name="Han C."/>
            <person name="Larimer F."/>
            <person name="Land M."/>
            <person name="Hauser L."/>
            <person name="Kyrpides N."/>
            <person name="Ovchinnikova G."/>
            <person name="Beliaev A.S."/>
            <person name="Richardson P."/>
        </authorList>
    </citation>
    <scope>NUCLEOTIDE SEQUENCE [LARGE SCALE GENOMIC DNA]</scope>
    <source>
        <strain>2CP-1 / ATCC BAA-258</strain>
    </source>
</reference>
<protein>
    <recommendedName>
        <fullName evidence="1">Dihydroorotase</fullName>
        <shortName evidence="1">DHOase</shortName>
        <ecNumber evidence="1">3.5.2.3</ecNumber>
    </recommendedName>
</protein>
<feature type="chain" id="PRO_1000193086" description="Dihydroorotase">
    <location>
        <begin position="1"/>
        <end position="433"/>
    </location>
</feature>
<feature type="active site" evidence="1">
    <location>
        <position position="310"/>
    </location>
</feature>
<feature type="binding site" evidence="1">
    <location>
        <position position="63"/>
    </location>
    <ligand>
        <name>Zn(2+)</name>
        <dbReference type="ChEBI" id="CHEBI:29105"/>
        <label>1</label>
    </ligand>
</feature>
<feature type="binding site" evidence="1">
    <location>
        <begin position="65"/>
        <end position="67"/>
    </location>
    <ligand>
        <name>substrate</name>
    </ligand>
</feature>
<feature type="binding site" evidence="1">
    <location>
        <position position="65"/>
    </location>
    <ligand>
        <name>Zn(2+)</name>
        <dbReference type="ChEBI" id="CHEBI:29105"/>
        <label>1</label>
    </ligand>
</feature>
<feature type="binding site" evidence="1">
    <location>
        <position position="97"/>
    </location>
    <ligand>
        <name>substrate</name>
    </ligand>
</feature>
<feature type="binding site" evidence="1">
    <location>
        <position position="155"/>
    </location>
    <ligand>
        <name>Zn(2+)</name>
        <dbReference type="ChEBI" id="CHEBI:29105"/>
        <label>1</label>
    </ligand>
</feature>
<feature type="binding site" evidence="1">
    <location>
        <position position="155"/>
    </location>
    <ligand>
        <name>Zn(2+)</name>
        <dbReference type="ChEBI" id="CHEBI:29105"/>
        <label>2</label>
    </ligand>
</feature>
<feature type="binding site" evidence="1">
    <location>
        <position position="182"/>
    </location>
    <ligand>
        <name>Zn(2+)</name>
        <dbReference type="ChEBI" id="CHEBI:29105"/>
        <label>2</label>
    </ligand>
</feature>
<feature type="binding site" evidence="1">
    <location>
        <position position="235"/>
    </location>
    <ligand>
        <name>Zn(2+)</name>
        <dbReference type="ChEBI" id="CHEBI:29105"/>
        <label>2</label>
    </ligand>
</feature>
<feature type="binding site" evidence="1">
    <location>
        <position position="283"/>
    </location>
    <ligand>
        <name>substrate</name>
    </ligand>
</feature>
<feature type="binding site" evidence="1">
    <location>
        <position position="310"/>
    </location>
    <ligand>
        <name>Zn(2+)</name>
        <dbReference type="ChEBI" id="CHEBI:29105"/>
        <label>1</label>
    </ligand>
</feature>
<feature type="binding site" evidence="1">
    <location>
        <position position="314"/>
    </location>
    <ligand>
        <name>substrate</name>
    </ligand>
</feature>
<sequence>MSDVLFIEGGRVIDPASGVDGVRTVVIRDGKVAEVAERVERPRDARAVDARNRWVTPGFVDLHVHLREPGQEYKETVATGARAAVAGGFTAVCAMPNTKPVNDCAAVTELVLARAAAAGLARVYPVGAISRGSNGEELAEYGELKASGCVALSDDGRPVMSSALMRRALEYARAFGLPLTVHEEDLHLVGKGVMHEGAAATRLGLKGIPSQAEDVMVLRDIALVELTGGRLHVAHVSTAGAVRAIREAKRRGLPVTGEVTPHHLALTDDDVGASGYSTDFKMNPPLRSAEDVRACREALADGTLDAIATDHAPHSAVEKDVEFDAAANGIVGLETAFSVCLGLVREGALTERRLVEALTVGPARVFGLPAGTLARGAAADVAVLDAAAEWTVDPARLHSKGRNTPWKGRRLAGRCTHTIVGGRIVHEEDKADR</sequence>
<evidence type="ECO:0000255" key="1">
    <source>
        <dbReference type="HAMAP-Rule" id="MF_00220"/>
    </source>
</evidence>
<keyword id="KW-0378">Hydrolase</keyword>
<keyword id="KW-0479">Metal-binding</keyword>
<keyword id="KW-0665">Pyrimidine biosynthesis</keyword>
<keyword id="KW-0862">Zinc</keyword>
<accession>B8JAE8</accession>
<proteinExistence type="inferred from homology"/>
<organism>
    <name type="scientific">Anaeromyxobacter dehalogenans (strain 2CP-1 / ATCC BAA-258)</name>
    <dbReference type="NCBI Taxonomy" id="455488"/>
    <lineage>
        <taxon>Bacteria</taxon>
        <taxon>Pseudomonadati</taxon>
        <taxon>Myxococcota</taxon>
        <taxon>Myxococcia</taxon>
        <taxon>Myxococcales</taxon>
        <taxon>Cystobacterineae</taxon>
        <taxon>Anaeromyxobacteraceae</taxon>
        <taxon>Anaeromyxobacter</taxon>
    </lineage>
</organism>
<dbReference type="EC" id="3.5.2.3" evidence="1"/>
<dbReference type="EMBL" id="CP001359">
    <property type="protein sequence ID" value="ACL65667.1"/>
    <property type="molecule type" value="Genomic_DNA"/>
</dbReference>
<dbReference type="RefSeq" id="WP_012633496.1">
    <property type="nucleotide sequence ID" value="NC_011891.1"/>
</dbReference>
<dbReference type="SMR" id="B8JAE8"/>
<dbReference type="KEGG" id="acp:A2cp1_2329"/>
<dbReference type="HOGENOM" id="CLU_015572_1_0_7"/>
<dbReference type="UniPathway" id="UPA00070">
    <property type="reaction ID" value="UER00117"/>
</dbReference>
<dbReference type="Proteomes" id="UP000007089">
    <property type="component" value="Chromosome"/>
</dbReference>
<dbReference type="GO" id="GO:0005737">
    <property type="term" value="C:cytoplasm"/>
    <property type="evidence" value="ECO:0007669"/>
    <property type="project" value="TreeGrafter"/>
</dbReference>
<dbReference type="GO" id="GO:0004038">
    <property type="term" value="F:allantoinase activity"/>
    <property type="evidence" value="ECO:0007669"/>
    <property type="project" value="TreeGrafter"/>
</dbReference>
<dbReference type="GO" id="GO:0004151">
    <property type="term" value="F:dihydroorotase activity"/>
    <property type="evidence" value="ECO:0007669"/>
    <property type="project" value="UniProtKB-UniRule"/>
</dbReference>
<dbReference type="GO" id="GO:0008270">
    <property type="term" value="F:zinc ion binding"/>
    <property type="evidence" value="ECO:0007669"/>
    <property type="project" value="UniProtKB-UniRule"/>
</dbReference>
<dbReference type="GO" id="GO:0044205">
    <property type="term" value="P:'de novo' UMP biosynthetic process"/>
    <property type="evidence" value="ECO:0007669"/>
    <property type="project" value="UniProtKB-UniRule"/>
</dbReference>
<dbReference type="GO" id="GO:0006145">
    <property type="term" value="P:purine nucleobase catabolic process"/>
    <property type="evidence" value="ECO:0007669"/>
    <property type="project" value="TreeGrafter"/>
</dbReference>
<dbReference type="CDD" id="cd01317">
    <property type="entry name" value="DHOase_IIa"/>
    <property type="match status" value="1"/>
</dbReference>
<dbReference type="Gene3D" id="3.20.20.140">
    <property type="entry name" value="Metal-dependent hydrolases"/>
    <property type="match status" value="1"/>
</dbReference>
<dbReference type="Gene3D" id="2.30.40.10">
    <property type="entry name" value="Urease, subunit C, domain 1"/>
    <property type="match status" value="1"/>
</dbReference>
<dbReference type="HAMAP" id="MF_00220_B">
    <property type="entry name" value="PyrC_classI_B"/>
    <property type="match status" value="1"/>
</dbReference>
<dbReference type="InterPro" id="IPR006680">
    <property type="entry name" value="Amidohydro-rel"/>
</dbReference>
<dbReference type="InterPro" id="IPR004722">
    <property type="entry name" value="DHOase"/>
</dbReference>
<dbReference type="InterPro" id="IPR050138">
    <property type="entry name" value="DHOase/Allantoinase_Hydrolase"/>
</dbReference>
<dbReference type="InterPro" id="IPR002195">
    <property type="entry name" value="Dihydroorotase_CS"/>
</dbReference>
<dbReference type="InterPro" id="IPR011059">
    <property type="entry name" value="Metal-dep_hydrolase_composite"/>
</dbReference>
<dbReference type="InterPro" id="IPR032466">
    <property type="entry name" value="Metal_Hydrolase"/>
</dbReference>
<dbReference type="NCBIfam" id="TIGR00857">
    <property type="entry name" value="pyrC_multi"/>
    <property type="match status" value="1"/>
</dbReference>
<dbReference type="PANTHER" id="PTHR43668">
    <property type="entry name" value="ALLANTOINASE"/>
    <property type="match status" value="1"/>
</dbReference>
<dbReference type="PANTHER" id="PTHR43668:SF2">
    <property type="entry name" value="ALLANTOINASE"/>
    <property type="match status" value="1"/>
</dbReference>
<dbReference type="Pfam" id="PF01979">
    <property type="entry name" value="Amidohydro_1"/>
    <property type="match status" value="1"/>
</dbReference>
<dbReference type="SUPFAM" id="SSF51338">
    <property type="entry name" value="Composite domain of metallo-dependent hydrolases"/>
    <property type="match status" value="1"/>
</dbReference>
<dbReference type="SUPFAM" id="SSF51556">
    <property type="entry name" value="Metallo-dependent hydrolases"/>
    <property type="match status" value="1"/>
</dbReference>
<dbReference type="PROSITE" id="PS00482">
    <property type="entry name" value="DIHYDROOROTASE_1"/>
    <property type="match status" value="1"/>
</dbReference>
<dbReference type="PROSITE" id="PS00483">
    <property type="entry name" value="DIHYDROOROTASE_2"/>
    <property type="match status" value="1"/>
</dbReference>